<feature type="chain" id="PRO_0000313042" description="Ubiquitin carboxyl-terminal hydrolase 16">
    <location>
        <begin position="1"/>
        <end position="1008"/>
    </location>
</feature>
<feature type="transmembrane region" description="Helical" evidence="1">
    <location>
        <begin position="7"/>
        <end position="27"/>
    </location>
</feature>
<feature type="domain" description="USP">
    <location>
        <begin position="542"/>
        <end position="847"/>
    </location>
</feature>
<feature type="zinc finger region" description="MYND-type" evidence="2">
    <location>
        <begin position="74"/>
        <end position="111"/>
    </location>
</feature>
<feature type="region of interest" description="Disordered" evidence="4">
    <location>
        <begin position="122"/>
        <end position="149"/>
    </location>
</feature>
<feature type="region of interest" description="Disordered" evidence="4">
    <location>
        <begin position="159"/>
        <end position="178"/>
    </location>
</feature>
<feature type="region of interest" description="Disordered" evidence="4">
    <location>
        <begin position="187"/>
        <end position="233"/>
    </location>
</feature>
<feature type="region of interest" description="Disordered" evidence="4">
    <location>
        <begin position="275"/>
        <end position="309"/>
    </location>
</feature>
<feature type="region of interest" description="Disordered" evidence="4">
    <location>
        <begin position="326"/>
        <end position="379"/>
    </location>
</feature>
<feature type="region of interest" description="Disordered" evidence="4">
    <location>
        <begin position="859"/>
        <end position="905"/>
    </location>
</feature>
<feature type="region of interest" description="Disordered" evidence="4">
    <location>
        <begin position="952"/>
        <end position="1008"/>
    </location>
</feature>
<feature type="compositionally biased region" description="Low complexity" evidence="4">
    <location>
        <begin position="193"/>
        <end position="203"/>
    </location>
</feature>
<feature type="compositionally biased region" description="Basic and acidic residues" evidence="4">
    <location>
        <begin position="222"/>
        <end position="233"/>
    </location>
</feature>
<feature type="compositionally biased region" description="Polar residues" evidence="4">
    <location>
        <begin position="284"/>
        <end position="295"/>
    </location>
</feature>
<feature type="compositionally biased region" description="Low complexity" evidence="4">
    <location>
        <begin position="340"/>
        <end position="351"/>
    </location>
</feature>
<feature type="compositionally biased region" description="Low complexity" evidence="4">
    <location>
        <begin position="878"/>
        <end position="888"/>
    </location>
</feature>
<feature type="compositionally biased region" description="Low complexity" evidence="4">
    <location>
        <begin position="965"/>
        <end position="992"/>
    </location>
</feature>
<feature type="active site" description="Nucleophile" evidence="3">
    <location>
        <position position="551"/>
    </location>
</feature>
<feature type="active site" description="Proton acceptor" evidence="3">
    <location>
        <position position="807"/>
    </location>
</feature>
<feature type="binding site" evidence="2">
    <location>
        <position position="74"/>
    </location>
    <ligand>
        <name>Zn(2+)</name>
        <dbReference type="ChEBI" id="CHEBI:29105"/>
        <label>1</label>
    </ligand>
</feature>
<feature type="binding site" evidence="2">
    <location>
        <position position="77"/>
    </location>
    <ligand>
        <name>Zn(2+)</name>
        <dbReference type="ChEBI" id="CHEBI:29105"/>
        <label>1</label>
    </ligand>
</feature>
<feature type="binding site" evidence="2">
    <location>
        <position position="85"/>
    </location>
    <ligand>
        <name>Zn(2+)</name>
        <dbReference type="ChEBI" id="CHEBI:29105"/>
        <label>2</label>
    </ligand>
</feature>
<feature type="binding site" evidence="2">
    <location>
        <position position="88"/>
    </location>
    <ligand>
        <name>Zn(2+)</name>
        <dbReference type="ChEBI" id="CHEBI:29105"/>
        <label>2</label>
    </ligand>
</feature>
<feature type="binding site" evidence="2">
    <location>
        <position position="94"/>
    </location>
    <ligand>
        <name>Zn(2+)</name>
        <dbReference type="ChEBI" id="CHEBI:29105"/>
        <label>1</label>
    </ligand>
</feature>
<feature type="binding site" evidence="2">
    <location>
        <position position="98"/>
    </location>
    <ligand>
        <name>Zn(2+)</name>
        <dbReference type="ChEBI" id="CHEBI:29105"/>
        <label>1</label>
    </ligand>
</feature>
<feature type="binding site" evidence="2">
    <location>
        <position position="107"/>
    </location>
    <ligand>
        <name>Zn(2+)</name>
        <dbReference type="ChEBI" id="CHEBI:29105"/>
        <label>2</label>
    </ligand>
</feature>
<feature type="binding site" evidence="2">
    <location>
        <position position="111"/>
    </location>
    <ligand>
        <name>Zn(2+)</name>
        <dbReference type="ChEBI" id="CHEBI:29105"/>
        <label>2</label>
    </ligand>
</feature>
<feature type="mutagenesis site" description="Abolishes deubiquitination activity." evidence="5">
    <original>C</original>
    <variation>S</variation>
    <location>
        <position position="551"/>
    </location>
</feature>
<feature type="sequence conflict" description="In Ref. 1; AAG42757." evidence="8" ref="1">
    <original>K</original>
    <variation>N</variation>
    <location>
        <position position="183"/>
    </location>
</feature>
<name>UBP16_ARATH</name>
<keyword id="KW-0378">Hydrolase</keyword>
<keyword id="KW-0472">Membrane</keyword>
<keyword id="KW-0479">Metal-binding</keyword>
<keyword id="KW-0645">Protease</keyword>
<keyword id="KW-1185">Reference proteome</keyword>
<keyword id="KW-0788">Thiol protease</keyword>
<keyword id="KW-0812">Transmembrane</keyword>
<keyword id="KW-1133">Transmembrane helix</keyword>
<keyword id="KW-0833">Ubl conjugation pathway</keyword>
<keyword id="KW-0862">Zinc</keyword>
<keyword id="KW-0863">Zinc-finger</keyword>
<comment type="function">
    <text evidence="5 6">Recognizes and hydrolyzes the peptide bond at the C-terminal Gly of ubiquitin. Involved in the processing of poly-ubiquitin precursors as well as that of ubiquitinated proteins. Involved in salt tolerance by modulating sodium transport activity and repressing cell death at least partially through modulating SHM1 stability and activity (PubMed:23232097). Involved in cadmium tolerance by interacting with HIPP27 and probably modulating its stability (PubMed:23857362).</text>
</comment>
<comment type="catalytic activity">
    <reaction evidence="5">
        <text>Thiol-dependent hydrolysis of ester, thioester, amide, peptide and isopeptide bonds formed by the C-terminal Gly of ubiquitin (a 76-residue protein attached to proteins as an intracellular targeting signal).</text>
        <dbReference type="EC" id="3.4.19.12"/>
    </reaction>
</comment>
<comment type="subunit">
    <text evidence="5 6">Interacts with SHM1 and SHM4 (PubMed:23232097). Interacts with HIPP27 (PubMed:23857362).</text>
</comment>
<comment type="interaction">
    <interactant intactId="EBI-6589403">
        <id>Q9SB51</id>
    </interactant>
    <interactant intactId="EBI-2292536">
        <id>Q9SZJ5</id>
        <label>SHM1</label>
    </interactant>
    <organismsDiffer>false</organismsDiffer>
    <experiments>3</experiments>
</comment>
<comment type="interaction">
    <interactant intactId="EBI-6589403">
        <id>Q9SB51</id>
    </interactant>
    <interactant intactId="EBI-6589432">
        <id>O23254</id>
        <label>SHM4</label>
    </interactant>
    <organismsDiffer>false</organismsDiffer>
    <experiments>3</experiments>
</comment>
<comment type="subcellular location">
    <subcellularLocation>
        <location evidence="8">Membrane</location>
        <topology evidence="8">Single-pass membrane protein</topology>
    </subcellularLocation>
</comment>
<comment type="tissue specificity">
    <text evidence="5 7">Expressed in flowers, siliques, rosette leaves, cauline leaves, stems and at a lower level in roots. In roots, expressed in the sieve elements.</text>
</comment>
<comment type="induction">
    <text evidence="5 7">Regulated by the transcription factors NAC045 and NAC086 and up-regulated by salt stress.</text>
</comment>
<comment type="disruption phenotype">
    <text evidence="5">Exhibits reduced salt tolerance. Reduced shoot growth in response to salt stress.</text>
</comment>
<comment type="similarity">
    <text evidence="8">Belongs to the peptidase C19 family.</text>
</comment>
<evidence type="ECO:0000255" key="1"/>
<evidence type="ECO:0000255" key="2">
    <source>
        <dbReference type="PROSITE-ProRule" id="PRU00134"/>
    </source>
</evidence>
<evidence type="ECO:0000255" key="3">
    <source>
        <dbReference type="PROSITE-ProRule" id="PRU10092"/>
    </source>
</evidence>
<evidence type="ECO:0000256" key="4">
    <source>
        <dbReference type="SAM" id="MobiDB-lite"/>
    </source>
</evidence>
<evidence type="ECO:0000269" key="5">
    <source>
    </source>
</evidence>
<evidence type="ECO:0000269" key="6">
    <source>
    </source>
</evidence>
<evidence type="ECO:0000269" key="7">
    <source>
    </source>
</evidence>
<evidence type="ECO:0000305" key="8"/>
<proteinExistence type="evidence at protein level"/>
<accession>Q9SB51</accession>
<accession>Q9FPS8</accession>
<organism>
    <name type="scientific">Arabidopsis thaliana</name>
    <name type="common">Mouse-ear cress</name>
    <dbReference type="NCBI Taxonomy" id="3702"/>
    <lineage>
        <taxon>Eukaryota</taxon>
        <taxon>Viridiplantae</taxon>
        <taxon>Streptophyta</taxon>
        <taxon>Embryophyta</taxon>
        <taxon>Tracheophyta</taxon>
        <taxon>Spermatophyta</taxon>
        <taxon>Magnoliopsida</taxon>
        <taxon>eudicotyledons</taxon>
        <taxon>Gunneridae</taxon>
        <taxon>Pentapetalae</taxon>
        <taxon>rosids</taxon>
        <taxon>malvids</taxon>
        <taxon>Brassicales</taxon>
        <taxon>Brassicaceae</taxon>
        <taxon>Camelineae</taxon>
        <taxon>Arabidopsis</taxon>
    </lineage>
</organism>
<gene>
    <name type="primary">UBP16</name>
    <name type="ordered locus">At4g24560</name>
    <name type="ORF">F22K18.240</name>
</gene>
<protein>
    <recommendedName>
        <fullName>Ubiquitin carboxyl-terminal hydrolase 16</fullName>
        <ecNumber>3.4.19.12</ecNumber>
    </recommendedName>
    <alternativeName>
        <fullName>Deubiquitinating enzyme 16</fullName>
        <shortName>AtUBP16</shortName>
    </alternativeName>
    <alternativeName>
        <fullName>Ubiquitin thioesterase 16</fullName>
    </alternativeName>
    <alternativeName>
        <fullName>Ubiquitin-specific-processing protease 16</fullName>
    </alternativeName>
</protein>
<dbReference type="EC" id="3.4.19.12"/>
<dbReference type="EMBL" id="AF302666">
    <property type="protein sequence ID" value="AAG42757.1"/>
    <property type="molecule type" value="mRNA"/>
</dbReference>
<dbReference type="EMBL" id="AL035356">
    <property type="protein sequence ID" value="CAA23007.1"/>
    <property type="molecule type" value="Genomic_DNA"/>
</dbReference>
<dbReference type="EMBL" id="AL161561">
    <property type="protein sequence ID" value="CAB79366.1"/>
    <property type="molecule type" value="Genomic_DNA"/>
</dbReference>
<dbReference type="EMBL" id="CP002687">
    <property type="protein sequence ID" value="AEE84926.1"/>
    <property type="molecule type" value="Genomic_DNA"/>
</dbReference>
<dbReference type="PIR" id="T05578">
    <property type="entry name" value="T05578"/>
</dbReference>
<dbReference type="RefSeq" id="NP_567705.1">
    <property type="nucleotide sequence ID" value="NM_118589.3"/>
</dbReference>
<dbReference type="SMR" id="Q9SB51"/>
<dbReference type="BioGRID" id="13847">
    <property type="interactions" value="4"/>
</dbReference>
<dbReference type="FunCoup" id="Q9SB51">
    <property type="interactions" value="2337"/>
</dbReference>
<dbReference type="IntAct" id="Q9SB51">
    <property type="interactions" value="2"/>
</dbReference>
<dbReference type="STRING" id="3702.Q9SB51"/>
<dbReference type="MEROPS" id="C19.A07"/>
<dbReference type="GlyGen" id="Q9SB51">
    <property type="glycosylation" value="2 sites"/>
</dbReference>
<dbReference type="iPTMnet" id="Q9SB51"/>
<dbReference type="PaxDb" id="3702-AT4G24560.1"/>
<dbReference type="ProteomicsDB" id="228481"/>
<dbReference type="EnsemblPlants" id="AT4G24560.1">
    <property type="protein sequence ID" value="AT4G24560.1"/>
    <property type="gene ID" value="AT4G24560"/>
</dbReference>
<dbReference type="GeneID" id="828558"/>
<dbReference type="Gramene" id="AT4G24560.1">
    <property type="protein sequence ID" value="AT4G24560.1"/>
    <property type="gene ID" value="AT4G24560"/>
</dbReference>
<dbReference type="KEGG" id="ath:AT4G24560"/>
<dbReference type="Araport" id="AT4G24560"/>
<dbReference type="TAIR" id="AT4G24560">
    <property type="gene designation" value="UBP16"/>
</dbReference>
<dbReference type="eggNOG" id="KOG1865">
    <property type="taxonomic scope" value="Eukaryota"/>
</dbReference>
<dbReference type="HOGENOM" id="CLU_007397_1_1_1"/>
<dbReference type="InParanoid" id="Q9SB51"/>
<dbReference type="OMA" id="LFYARCT"/>
<dbReference type="PhylomeDB" id="Q9SB51"/>
<dbReference type="PRO" id="PR:Q9SB51"/>
<dbReference type="Proteomes" id="UP000006548">
    <property type="component" value="Chromosome 4"/>
</dbReference>
<dbReference type="ExpressionAtlas" id="Q9SB51">
    <property type="expression patterns" value="baseline and differential"/>
</dbReference>
<dbReference type="GO" id="GO:0016020">
    <property type="term" value="C:membrane"/>
    <property type="evidence" value="ECO:0007669"/>
    <property type="project" value="UniProtKB-SubCell"/>
</dbReference>
<dbReference type="GO" id="GO:0004843">
    <property type="term" value="F:cysteine-type deubiquitinase activity"/>
    <property type="evidence" value="ECO:0000314"/>
    <property type="project" value="UniProtKB"/>
</dbReference>
<dbReference type="GO" id="GO:0008270">
    <property type="term" value="F:zinc ion binding"/>
    <property type="evidence" value="ECO:0007669"/>
    <property type="project" value="UniProtKB-KW"/>
</dbReference>
<dbReference type="GO" id="GO:0051301">
    <property type="term" value="P:cell division"/>
    <property type="evidence" value="ECO:0000316"/>
    <property type="project" value="TAIR"/>
</dbReference>
<dbReference type="GO" id="GO:0009908">
    <property type="term" value="P:flower development"/>
    <property type="evidence" value="ECO:0000316"/>
    <property type="project" value="TAIR"/>
</dbReference>
<dbReference type="GO" id="GO:0048366">
    <property type="term" value="P:leaf development"/>
    <property type="evidence" value="ECO:0000316"/>
    <property type="project" value="TAIR"/>
</dbReference>
<dbReference type="GO" id="GO:0016579">
    <property type="term" value="P:protein deubiquitination"/>
    <property type="evidence" value="ECO:0000314"/>
    <property type="project" value="UniProtKB"/>
</dbReference>
<dbReference type="GO" id="GO:0006508">
    <property type="term" value="P:proteolysis"/>
    <property type="evidence" value="ECO:0007669"/>
    <property type="project" value="UniProtKB-KW"/>
</dbReference>
<dbReference type="GO" id="GO:1901000">
    <property type="term" value="P:regulation of response to salt stress"/>
    <property type="evidence" value="ECO:0000315"/>
    <property type="project" value="UniProtKB"/>
</dbReference>
<dbReference type="GO" id="GO:0009651">
    <property type="term" value="P:response to salt stress"/>
    <property type="evidence" value="ECO:0000270"/>
    <property type="project" value="UniProtKB"/>
</dbReference>
<dbReference type="GO" id="GO:0048364">
    <property type="term" value="P:root development"/>
    <property type="evidence" value="ECO:0000316"/>
    <property type="project" value="TAIR"/>
</dbReference>
<dbReference type="GO" id="GO:0048367">
    <property type="term" value="P:shoot system development"/>
    <property type="evidence" value="ECO:0000316"/>
    <property type="project" value="TAIR"/>
</dbReference>
<dbReference type="FunFam" id="3.90.70.10:FF:000026">
    <property type="entry name" value="Ubiquitin carboxyl-terminal hydrolase 15"/>
    <property type="match status" value="1"/>
</dbReference>
<dbReference type="FunFam" id="6.10.140.2220:FF:000006">
    <property type="entry name" value="Ubiquitin carboxyl-terminal hydrolase 15"/>
    <property type="match status" value="1"/>
</dbReference>
<dbReference type="Gene3D" id="6.10.140.2220">
    <property type="match status" value="1"/>
</dbReference>
<dbReference type="Gene3D" id="3.90.70.10">
    <property type="entry name" value="Cysteine proteinases"/>
    <property type="match status" value="1"/>
</dbReference>
<dbReference type="InterPro" id="IPR038765">
    <property type="entry name" value="Papain-like_cys_pep_sf"/>
</dbReference>
<dbReference type="InterPro" id="IPR050164">
    <property type="entry name" value="Peptidase_C19"/>
</dbReference>
<dbReference type="InterPro" id="IPR001394">
    <property type="entry name" value="Peptidase_C19_UCH"/>
</dbReference>
<dbReference type="InterPro" id="IPR018200">
    <property type="entry name" value="USP_CS"/>
</dbReference>
<dbReference type="InterPro" id="IPR028889">
    <property type="entry name" value="USP_dom"/>
</dbReference>
<dbReference type="InterPro" id="IPR002893">
    <property type="entry name" value="Znf_MYND"/>
</dbReference>
<dbReference type="PANTHER" id="PTHR24006">
    <property type="entry name" value="UBIQUITIN CARBOXYL-TERMINAL HYDROLASE"/>
    <property type="match status" value="1"/>
</dbReference>
<dbReference type="PANTHER" id="PTHR24006:SF874">
    <property type="entry name" value="UBIQUITIN CARBOXYL-TERMINAL HYDROLASE 16"/>
    <property type="match status" value="1"/>
</dbReference>
<dbReference type="Pfam" id="PF00443">
    <property type="entry name" value="UCH"/>
    <property type="match status" value="1"/>
</dbReference>
<dbReference type="Pfam" id="PF01753">
    <property type="entry name" value="zf-MYND"/>
    <property type="match status" value="1"/>
</dbReference>
<dbReference type="SUPFAM" id="SSF54001">
    <property type="entry name" value="Cysteine proteinases"/>
    <property type="match status" value="1"/>
</dbReference>
<dbReference type="SUPFAM" id="SSF144232">
    <property type="entry name" value="HIT/MYND zinc finger-like"/>
    <property type="match status" value="1"/>
</dbReference>
<dbReference type="PROSITE" id="PS00972">
    <property type="entry name" value="USP_1"/>
    <property type="match status" value="1"/>
</dbReference>
<dbReference type="PROSITE" id="PS50235">
    <property type="entry name" value="USP_3"/>
    <property type="match status" value="1"/>
</dbReference>
<dbReference type="PROSITE" id="PS01360">
    <property type="entry name" value="ZF_MYND_1"/>
    <property type="match status" value="1"/>
</dbReference>
<dbReference type="PROSITE" id="PS50865">
    <property type="entry name" value="ZF_MYND_2"/>
    <property type="match status" value="1"/>
</dbReference>
<reference key="1">
    <citation type="journal article" date="2000" name="Plant Physiol.">
        <title>The ubiquitin-specific protease family from Arabidopsis. AtUBP1 and 2 are required for the resistance to the amino acid analog canavanine.</title>
        <authorList>
            <person name="Yan N."/>
            <person name="Doelling J.H."/>
            <person name="Falbel T.G."/>
            <person name="Durski A.M."/>
            <person name="Vierstra R.D."/>
        </authorList>
    </citation>
    <scope>NUCLEOTIDE SEQUENCE [MRNA]</scope>
    <scope>GENE FAMILY ORGANIZATION</scope>
    <scope>NOMENCLATURE</scope>
    <source>
        <strain>cv. Columbia</strain>
    </source>
</reference>
<reference key="2">
    <citation type="journal article" date="1999" name="Nature">
        <title>Sequence and analysis of chromosome 4 of the plant Arabidopsis thaliana.</title>
        <authorList>
            <person name="Mayer K.F.X."/>
            <person name="Schueller C."/>
            <person name="Wambutt R."/>
            <person name="Murphy G."/>
            <person name="Volckaert G."/>
            <person name="Pohl T."/>
            <person name="Duesterhoeft A."/>
            <person name="Stiekema W."/>
            <person name="Entian K.-D."/>
            <person name="Terryn N."/>
            <person name="Harris B."/>
            <person name="Ansorge W."/>
            <person name="Brandt P."/>
            <person name="Grivell L.A."/>
            <person name="Rieger M."/>
            <person name="Weichselgartner M."/>
            <person name="de Simone V."/>
            <person name="Obermaier B."/>
            <person name="Mache R."/>
            <person name="Mueller M."/>
            <person name="Kreis M."/>
            <person name="Delseny M."/>
            <person name="Puigdomenech P."/>
            <person name="Watson M."/>
            <person name="Schmidtheini T."/>
            <person name="Reichert B."/>
            <person name="Portetelle D."/>
            <person name="Perez-Alonso M."/>
            <person name="Boutry M."/>
            <person name="Bancroft I."/>
            <person name="Vos P."/>
            <person name="Hoheisel J."/>
            <person name="Zimmermann W."/>
            <person name="Wedler H."/>
            <person name="Ridley P."/>
            <person name="Langham S.-A."/>
            <person name="McCullagh B."/>
            <person name="Bilham L."/>
            <person name="Robben J."/>
            <person name="van der Schueren J."/>
            <person name="Grymonprez B."/>
            <person name="Chuang Y.-J."/>
            <person name="Vandenbussche F."/>
            <person name="Braeken M."/>
            <person name="Weltjens I."/>
            <person name="Voet M."/>
            <person name="Bastiaens I."/>
            <person name="Aert R."/>
            <person name="Defoor E."/>
            <person name="Weitzenegger T."/>
            <person name="Bothe G."/>
            <person name="Ramsperger U."/>
            <person name="Hilbert H."/>
            <person name="Braun M."/>
            <person name="Holzer E."/>
            <person name="Brandt A."/>
            <person name="Peters S."/>
            <person name="van Staveren M."/>
            <person name="Dirkse W."/>
            <person name="Mooijman P."/>
            <person name="Klein Lankhorst R."/>
            <person name="Rose M."/>
            <person name="Hauf J."/>
            <person name="Koetter P."/>
            <person name="Berneiser S."/>
            <person name="Hempel S."/>
            <person name="Feldpausch M."/>
            <person name="Lamberth S."/>
            <person name="Van den Daele H."/>
            <person name="De Keyser A."/>
            <person name="Buysshaert C."/>
            <person name="Gielen J."/>
            <person name="Villarroel R."/>
            <person name="De Clercq R."/>
            <person name="van Montagu M."/>
            <person name="Rogers J."/>
            <person name="Cronin A."/>
            <person name="Quail M.A."/>
            <person name="Bray-Allen S."/>
            <person name="Clark L."/>
            <person name="Doggett J."/>
            <person name="Hall S."/>
            <person name="Kay M."/>
            <person name="Lennard N."/>
            <person name="McLay K."/>
            <person name="Mayes R."/>
            <person name="Pettett A."/>
            <person name="Rajandream M.A."/>
            <person name="Lyne M."/>
            <person name="Benes V."/>
            <person name="Rechmann S."/>
            <person name="Borkova D."/>
            <person name="Bloecker H."/>
            <person name="Scharfe M."/>
            <person name="Grimm M."/>
            <person name="Loehnert T.-H."/>
            <person name="Dose S."/>
            <person name="de Haan M."/>
            <person name="Maarse A.C."/>
            <person name="Schaefer M."/>
            <person name="Mueller-Auer S."/>
            <person name="Gabel C."/>
            <person name="Fuchs M."/>
            <person name="Fartmann B."/>
            <person name="Granderath K."/>
            <person name="Dauner D."/>
            <person name="Herzl A."/>
            <person name="Neumann S."/>
            <person name="Argiriou A."/>
            <person name="Vitale D."/>
            <person name="Liguori R."/>
            <person name="Piravandi E."/>
            <person name="Massenet O."/>
            <person name="Quigley F."/>
            <person name="Clabauld G."/>
            <person name="Muendlein A."/>
            <person name="Felber R."/>
            <person name="Schnabl S."/>
            <person name="Hiller R."/>
            <person name="Schmidt W."/>
            <person name="Lecharny A."/>
            <person name="Aubourg S."/>
            <person name="Chefdor F."/>
            <person name="Cooke R."/>
            <person name="Berger C."/>
            <person name="Monfort A."/>
            <person name="Casacuberta E."/>
            <person name="Gibbons T."/>
            <person name="Weber N."/>
            <person name="Vandenbol M."/>
            <person name="Bargues M."/>
            <person name="Terol J."/>
            <person name="Torres A."/>
            <person name="Perez-Perez A."/>
            <person name="Purnelle B."/>
            <person name="Bent E."/>
            <person name="Johnson S."/>
            <person name="Tacon D."/>
            <person name="Jesse T."/>
            <person name="Heijnen L."/>
            <person name="Schwarz S."/>
            <person name="Scholler P."/>
            <person name="Heber S."/>
            <person name="Francs P."/>
            <person name="Bielke C."/>
            <person name="Frishman D."/>
            <person name="Haase D."/>
            <person name="Lemcke K."/>
            <person name="Mewes H.-W."/>
            <person name="Stocker S."/>
            <person name="Zaccaria P."/>
            <person name="Bevan M."/>
            <person name="Wilson R.K."/>
            <person name="de la Bastide M."/>
            <person name="Habermann K."/>
            <person name="Parnell L."/>
            <person name="Dedhia N."/>
            <person name="Gnoj L."/>
            <person name="Schutz K."/>
            <person name="Huang E."/>
            <person name="Spiegel L."/>
            <person name="Sekhon M."/>
            <person name="Murray J."/>
            <person name="Sheet P."/>
            <person name="Cordes M."/>
            <person name="Abu-Threideh J."/>
            <person name="Stoneking T."/>
            <person name="Kalicki J."/>
            <person name="Graves T."/>
            <person name="Harmon G."/>
            <person name="Edwards J."/>
            <person name="Latreille P."/>
            <person name="Courtney L."/>
            <person name="Cloud J."/>
            <person name="Abbott A."/>
            <person name="Scott K."/>
            <person name="Johnson D."/>
            <person name="Minx P."/>
            <person name="Bentley D."/>
            <person name="Fulton B."/>
            <person name="Miller N."/>
            <person name="Greco T."/>
            <person name="Kemp K."/>
            <person name="Kramer J."/>
            <person name="Fulton L."/>
            <person name="Mardis E."/>
            <person name="Dante M."/>
            <person name="Pepin K."/>
            <person name="Hillier L.W."/>
            <person name="Nelson J."/>
            <person name="Spieth J."/>
            <person name="Ryan E."/>
            <person name="Andrews S."/>
            <person name="Geisel C."/>
            <person name="Layman D."/>
            <person name="Du H."/>
            <person name="Ali J."/>
            <person name="Berghoff A."/>
            <person name="Jones K."/>
            <person name="Drone K."/>
            <person name="Cotton M."/>
            <person name="Joshu C."/>
            <person name="Antonoiu B."/>
            <person name="Zidanic M."/>
            <person name="Strong C."/>
            <person name="Sun H."/>
            <person name="Lamar B."/>
            <person name="Yordan C."/>
            <person name="Ma P."/>
            <person name="Zhong J."/>
            <person name="Preston R."/>
            <person name="Vil D."/>
            <person name="Shekher M."/>
            <person name="Matero A."/>
            <person name="Shah R."/>
            <person name="Swaby I.K."/>
            <person name="O'Shaughnessy A."/>
            <person name="Rodriguez M."/>
            <person name="Hoffman J."/>
            <person name="Till S."/>
            <person name="Granat S."/>
            <person name="Shohdy N."/>
            <person name="Hasegawa A."/>
            <person name="Hameed A."/>
            <person name="Lodhi M."/>
            <person name="Johnson A."/>
            <person name="Chen E."/>
            <person name="Marra M.A."/>
            <person name="Martienssen R."/>
            <person name="McCombie W.R."/>
        </authorList>
    </citation>
    <scope>NUCLEOTIDE SEQUENCE [LARGE SCALE GENOMIC DNA]</scope>
    <source>
        <strain>cv. Columbia</strain>
    </source>
</reference>
<reference key="3">
    <citation type="journal article" date="2017" name="Plant J.">
        <title>Araport11: a complete reannotation of the Arabidopsis thaliana reference genome.</title>
        <authorList>
            <person name="Cheng C.Y."/>
            <person name="Krishnakumar V."/>
            <person name="Chan A.P."/>
            <person name="Thibaud-Nissen F."/>
            <person name="Schobel S."/>
            <person name="Town C.D."/>
        </authorList>
    </citation>
    <scope>GENOME REANNOTATION</scope>
    <source>
        <strain>cv. Columbia</strain>
    </source>
</reference>
<reference key="4">
    <citation type="journal article" date="2012" name="Plant Cell">
        <title>Ubiquitin-specific protease16 modulates salt tolerance in Arabidopsis by regulating Na(+)/H(+) antiport activity and serine hydroxymethyltransferase stability.</title>
        <authorList>
            <person name="Zhou H."/>
            <person name="Zhao J."/>
            <person name="Yang Y."/>
            <person name="Chen C."/>
            <person name="Liu Y."/>
            <person name="Jin X."/>
            <person name="Chen L."/>
            <person name="Li X."/>
            <person name="Deng X.W."/>
            <person name="Schumaker K.S."/>
            <person name="Guo Y."/>
        </authorList>
    </citation>
    <scope>FUNCTION</scope>
    <scope>DISRUPTION PHENOTYPE</scope>
    <scope>INDUCTION BY SALT</scope>
    <scope>TISSUE SPECIFICITY</scope>
    <scope>MUTAGENESIS OF CYS-551</scope>
    <scope>CATALYTIC ACTIVITY</scope>
    <scope>INTERACTION WITH SHM1 AND SHM4</scope>
    <scope>SUBCELLULAR LOCATION</scope>
</reference>
<reference key="5">
    <citation type="journal article" date="2013" name="Plant Signal. Behav.">
        <title>UBIQUITIN-SPECIFIC PROTEASE16 interacts with a HEAVY METAL ASSOCIATED ISOPRENYLATED PLANT PROTEIN27 and modulates cadmium tolerance.</title>
        <authorList>
            <person name="Zhao J."/>
            <person name="Zhou H."/>
            <person name="Li Y."/>
        </authorList>
    </citation>
    <scope>FUNCTION</scope>
    <scope>INTERACTION WITH HIPP27</scope>
</reference>
<reference key="6">
    <citation type="journal article" date="2014" name="Science">
        <title>Plant development. Arabidopsis NAC45/86 direct sieve element morphogenesis culminating in enucleation.</title>
        <authorList>
            <person name="Furuta K.M."/>
            <person name="Yadav S.R."/>
            <person name="Lehesranta S."/>
            <person name="Belevich I."/>
            <person name="Miyashima S."/>
            <person name="Heo J.O."/>
            <person name="Vaten A."/>
            <person name="Lindgren O."/>
            <person name="De Rybel B."/>
            <person name="Van Isterdael G."/>
            <person name="Somervuo P."/>
            <person name="Lichtenberger R."/>
            <person name="Rocha R."/>
            <person name="Thitamadee S."/>
            <person name="Taehtiharju S."/>
            <person name="Auvinen P."/>
            <person name="Beeckman T."/>
            <person name="Jokitalo E."/>
            <person name="Helariutta Y."/>
        </authorList>
    </citation>
    <scope>INDUCTION BY NAC045 AND NAC086</scope>
    <scope>TISSUE SPECIFICITY</scope>
</reference>
<sequence length="1008" mass="110600">MLLVLDLGISSLVLVVSLVLPLIGLFVRHKWRVAAQRREEIRRLLIHASEEAARAELEASVEFSSVAVSNVFHCPVCYCLATTRCSRCKAVRYCSGKCQIIHWRQGHKDECHPASIVYDSEDESDSDLRLGEENGQNTPEETLLVGPEPVTIPIGESLLSNRARSPEDGNGDIADNKDDLIDKEEAVSVAETSGSSFSGFSSSPRNDSGDEISRCESFSSSESERSESLLDAHVSVEPEDTCFSTIEDAPSKLLSPKFVHLVESVDNLANLPKLSVHKPEDDAGQNQSQSRSLHSLVTDRHPVSADPSLKSSDFWGTALGSAERVSDSCVKSKSGRPGNSSLHFSFGSGSSRDTSAAKVSEQRSSILKEAPRGTGYISDGVNLRERNAKRFDEAEIALPISSSTDALSPLDSSNLSHVTLPKSKSASSENGSMLAPLKVGEVQLLASKASNTKKCADLMKHSPLGAKSVRVLDHQKQNGAVVQHINSLHGRSGLKASVLKVVDQWTRPKSENEMAGRHGHKGLFPYEVFAKLYTYKIEFQPCGLINVGNSCFANVVFQCLMFTPPLTTYFLQQFHSRACTKKEQCFTCGFEKLVVKAKEEKSPLSPNGLLSQLQNIGIFLGNGKEEDAHEFLRFVVDTMQSVCIKASEYDMTKSSKLEDTTLIGLTFGGYLRSKIKCMKCQVKSELREKMMDLTVEIDGDISTLDDALRRFTRTEILDGENKYRCGSCKSYERAKKKLKITEPPNVLTIALKRFQAGKFGKLNKLIRFPETLDLAPYVSGGSEKSHDYKLYGVIVHLDVMNAAFSGHYVCYIRNQNKWYKADDSTVVTSDVERILTKGAYMLFYARCTPTPPRLAVCTKTEASNKKSRVPLPKANEKSTISRSVSTSSPELSSNTPGGGRSGNIQSFYSSFQRLQKILEEDSASDSSSLFDSNSDECSCSTDSTSMDDFADFIFGDHQGRAHGQSETPSPTSSSSSSSPPFTRRSPLSRSSPETYGTSRHQLPLGGER</sequence>